<evidence type="ECO:0000250" key="1"/>
<evidence type="ECO:0000255" key="2"/>
<evidence type="ECO:0000256" key="3">
    <source>
        <dbReference type="SAM" id="MobiDB-lite"/>
    </source>
</evidence>
<evidence type="ECO:0000305" key="4"/>
<evidence type="ECO:0000312" key="5">
    <source>
        <dbReference type="HGNC" id="HGNC:44659"/>
    </source>
</evidence>
<proteinExistence type="evidence at protein level"/>
<accession>Q96MC4</accession>
<protein>
    <recommendedName>
        <fullName evidence="4">CEP295 N-terminal-like protein</fullName>
    </recommendedName>
    <alternativeName>
        <fullName evidence="5">KIAA1731 N-terminal like protein</fullName>
    </alternativeName>
</protein>
<sequence>MCSGWSSSVIWRHTQFAVERCGFCGSSGPGAPLEPSTLGSKHLPWEAVSAGFADRNRNMDGAMWLSLCPDNEDLLWRKKHKLLQARGKGDLALQRRADAKLWKNYQLQRLAEELRRGYQEAQHLHVGGLDRLQSARLLGWGGGRARENEPDSQGPIQRRSARPPRAKEKHRAALSEERSCREELGQQHPRHSRPRKTAASPEKPQTTKATGRMNSHLAPPEKRKGRPEPSTKSGGGRCAIHPRRSKGADLERSNPLVAAVGEIGLVEEKEKGTARAGRRQLGKGAVCFVPALTSRSQGQSLEGKLRDLGQLWPADSSCRREAVSPASQCTLREKNKWQKELELAFEELFNINRKLKKHLCLYLALKPRMDQRPGEGHAFSEMQECGAGTPRGKKMADPEMLPAGEPRSPAEEEAQQAASKTDLKTFMGKAQNQKYQGTVKPTFRNGSQTLSPEAGIFINKEDSLLYSTESGQETPKLGTLAEGSLQLHLQDQADRVGSTASRQRQKAEMEQRRQKQLESLEQMEHPDMSLEIHYKAELEKERREQRRARLAHLKSSSTRAQERERGSELSTTSPSGTSLADDDRHSQMIRDQQQQILQQNRLHKQFLEEARKCLREFQNIC</sequence>
<dbReference type="EMBL" id="AK057217">
    <property type="protein sequence ID" value="BAB71383.1"/>
    <property type="molecule type" value="mRNA"/>
</dbReference>
<dbReference type="EMBL" id="AC022966">
    <property type="status" value="NOT_ANNOTATED_CDS"/>
    <property type="molecule type" value="Genomic_DNA"/>
</dbReference>
<dbReference type="EMBL" id="AC100788">
    <property type="status" value="NOT_ANNOTATED_CDS"/>
    <property type="molecule type" value="Genomic_DNA"/>
</dbReference>
<dbReference type="CCDS" id="CCDS58603.1"/>
<dbReference type="RefSeq" id="NP_001230469.1">
    <property type="nucleotide sequence ID" value="NM_001243540.2"/>
</dbReference>
<dbReference type="RefSeq" id="NP_001230470.1">
    <property type="nucleotide sequence ID" value="NM_001243541.1"/>
</dbReference>
<dbReference type="RefSeq" id="XP_047291039.1">
    <property type="nucleotide sequence ID" value="XM_047435083.1"/>
</dbReference>
<dbReference type="RefSeq" id="XP_047291040.1">
    <property type="nucleotide sequence ID" value="XM_047435084.1"/>
</dbReference>
<dbReference type="RefSeq" id="XP_054170620.1">
    <property type="nucleotide sequence ID" value="XM_054314645.1"/>
</dbReference>
<dbReference type="SMR" id="Q96MC4"/>
<dbReference type="BioGRID" id="1530759">
    <property type="interactions" value="4"/>
</dbReference>
<dbReference type="FunCoup" id="Q96MC4">
    <property type="interactions" value="6"/>
</dbReference>
<dbReference type="IntAct" id="Q96MC4">
    <property type="interactions" value="2"/>
</dbReference>
<dbReference type="STRING" id="9606.ENSP00000312767"/>
<dbReference type="GlyGen" id="Q96MC4">
    <property type="glycosylation" value="1 site, 1 O-linked glycan (1 site)"/>
</dbReference>
<dbReference type="iPTMnet" id="Q96MC4"/>
<dbReference type="PhosphoSitePlus" id="Q96MC4"/>
<dbReference type="BioMuta" id="CEP295NL"/>
<dbReference type="DMDM" id="74732346"/>
<dbReference type="jPOST" id="Q96MC4"/>
<dbReference type="MassIVE" id="Q96MC4"/>
<dbReference type="PaxDb" id="9606-ENSP00000312767"/>
<dbReference type="PeptideAtlas" id="Q96MC4"/>
<dbReference type="Antibodypedia" id="32615">
    <property type="antibodies" value="16 antibodies from 6 providers"/>
</dbReference>
<dbReference type="DNASU" id="100653515"/>
<dbReference type="Ensembl" id="ENST00000322630.3">
    <property type="protein sequence ID" value="ENSP00000312767.2"/>
    <property type="gene ID" value="ENSG00000178404.11"/>
</dbReference>
<dbReference type="GeneID" id="100653515"/>
<dbReference type="KEGG" id="hsa:100653515"/>
<dbReference type="MANE-Select" id="ENST00000322630.3">
    <property type="protein sequence ID" value="ENSP00000312767.2"/>
    <property type="RefSeq nucleotide sequence ID" value="NM_001243540.2"/>
    <property type="RefSeq protein sequence ID" value="NP_001230469.1"/>
</dbReference>
<dbReference type="UCSC" id="uc002jwg.3">
    <property type="organism name" value="human"/>
</dbReference>
<dbReference type="AGR" id="HGNC:44659"/>
<dbReference type="CTD" id="100653515"/>
<dbReference type="DisGeNET" id="100653515"/>
<dbReference type="GeneCards" id="CEP295NL"/>
<dbReference type="HGNC" id="HGNC:44659">
    <property type="gene designation" value="CEP295NL"/>
</dbReference>
<dbReference type="HPA" id="ENSG00000178404">
    <property type="expression patterns" value="Tissue enriched (testis)"/>
</dbReference>
<dbReference type="neXtProt" id="NX_Q96MC4"/>
<dbReference type="OpenTargets" id="ENSG00000178404"/>
<dbReference type="VEuPathDB" id="HostDB:ENSG00000178404"/>
<dbReference type="eggNOG" id="ENOG502QSZR">
    <property type="taxonomic scope" value="Eukaryota"/>
</dbReference>
<dbReference type="GeneTree" id="ENSGT00940000153123"/>
<dbReference type="HOGENOM" id="CLU_447551_0_0_1"/>
<dbReference type="InParanoid" id="Q96MC4"/>
<dbReference type="OMA" id="WHSQMIR"/>
<dbReference type="OrthoDB" id="6359887at2759"/>
<dbReference type="PAN-GO" id="Q96MC4">
    <property type="GO annotations" value="5 GO annotations based on evolutionary models"/>
</dbReference>
<dbReference type="PhylomeDB" id="Q96MC4"/>
<dbReference type="TreeFam" id="TF331536"/>
<dbReference type="PathwayCommons" id="Q96MC4"/>
<dbReference type="SignaLink" id="Q96MC4"/>
<dbReference type="BioGRID-ORCS" id="100653515">
    <property type="hits" value="13 hits in 1054 CRISPR screens"/>
</dbReference>
<dbReference type="GenomeRNAi" id="100653515"/>
<dbReference type="Pharos" id="Q96MC4">
    <property type="development level" value="Tdark"/>
</dbReference>
<dbReference type="PRO" id="PR:Q96MC4"/>
<dbReference type="Proteomes" id="UP000005640">
    <property type="component" value="Chromosome 17"/>
</dbReference>
<dbReference type="RNAct" id="Q96MC4">
    <property type="molecule type" value="protein"/>
</dbReference>
<dbReference type="Bgee" id="ENSG00000178404">
    <property type="expression patterns" value="Expressed in sural nerve and 97 other cell types or tissues"/>
</dbReference>
<dbReference type="ExpressionAtlas" id="Q96MC4">
    <property type="expression patterns" value="baseline and differential"/>
</dbReference>
<dbReference type="GO" id="GO:0005814">
    <property type="term" value="C:centriole"/>
    <property type="evidence" value="ECO:0000318"/>
    <property type="project" value="GO_Central"/>
</dbReference>
<dbReference type="GO" id="GO:0005813">
    <property type="term" value="C:centrosome"/>
    <property type="evidence" value="ECO:0000318"/>
    <property type="project" value="GO_Central"/>
</dbReference>
<dbReference type="GO" id="GO:0005929">
    <property type="term" value="C:cilium"/>
    <property type="evidence" value="ECO:0007669"/>
    <property type="project" value="UniProtKB-SubCell"/>
</dbReference>
<dbReference type="GO" id="GO:0005829">
    <property type="term" value="C:cytosol"/>
    <property type="evidence" value="ECO:0000318"/>
    <property type="project" value="GO_Central"/>
</dbReference>
<dbReference type="GO" id="GO:0046599">
    <property type="term" value="P:regulation of centriole replication"/>
    <property type="evidence" value="ECO:0000318"/>
    <property type="project" value="GO_Central"/>
</dbReference>
<dbReference type="PANTHER" id="PTHR21553">
    <property type="entry name" value="ALMS1-RELATED"/>
    <property type="match status" value="1"/>
</dbReference>
<dbReference type="PANTHER" id="PTHR21553:SF33">
    <property type="entry name" value="CEP295 N-TERMINAL-LIKE PROTEIN"/>
    <property type="match status" value="1"/>
</dbReference>
<comment type="subcellular location">
    <subcellularLocation>
        <location evidence="1">Cell projection</location>
        <location evidence="1">Cilium</location>
    </subcellularLocation>
    <text evidence="1">Colocalizes to the motile cilium of mature spermatozoa.</text>
</comment>
<keyword id="KW-0966">Cell projection</keyword>
<keyword id="KW-0969">Cilium</keyword>
<keyword id="KW-0175">Coiled coil</keyword>
<keyword id="KW-1267">Proteomics identification</keyword>
<keyword id="KW-1185">Reference proteome</keyword>
<feature type="chain" id="PRO_0000422183" description="CEP295 N-terminal-like protein">
    <location>
        <begin position="1"/>
        <end position="621"/>
    </location>
</feature>
<feature type="region of interest" description="Disordered" evidence="3">
    <location>
        <begin position="142"/>
        <end position="253"/>
    </location>
</feature>
<feature type="region of interest" description="Disordered" evidence="3">
    <location>
        <begin position="385"/>
        <end position="421"/>
    </location>
</feature>
<feature type="region of interest" description="Disordered" evidence="3">
    <location>
        <begin position="491"/>
        <end position="529"/>
    </location>
</feature>
<feature type="region of interest" description="Disordered" evidence="3">
    <location>
        <begin position="543"/>
        <end position="586"/>
    </location>
</feature>
<feature type="coiled-coil region" evidence="2">
    <location>
        <begin position="328"/>
        <end position="359"/>
    </location>
</feature>
<feature type="coiled-coil region" evidence="2">
    <location>
        <begin position="498"/>
        <end position="525"/>
    </location>
</feature>
<feature type="compositionally biased region" description="Basic residues" evidence="3">
    <location>
        <begin position="159"/>
        <end position="170"/>
    </location>
</feature>
<feature type="compositionally biased region" description="Basic and acidic residues" evidence="3">
    <location>
        <begin position="171"/>
        <end position="185"/>
    </location>
</feature>
<feature type="compositionally biased region" description="Polar residues" evidence="3">
    <location>
        <begin position="203"/>
        <end position="213"/>
    </location>
</feature>
<feature type="compositionally biased region" description="Basic and acidic residues" evidence="3">
    <location>
        <begin position="219"/>
        <end position="229"/>
    </location>
</feature>
<feature type="compositionally biased region" description="Basic and acidic residues" evidence="3">
    <location>
        <begin position="505"/>
        <end position="529"/>
    </location>
</feature>
<feature type="compositionally biased region" description="Polar residues" evidence="3">
    <location>
        <begin position="568"/>
        <end position="578"/>
    </location>
</feature>
<reference key="1">
    <citation type="journal article" date="2004" name="Nat. Genet.">
        <title>Complete sequencing and characterization of 21,243 full-length human cDNAs.</title>
        <authorList>
            <person name="Ota T."/>
            <person name="Suzuki Y."/>
            <person name="Nishikawa T."/>
            <person name="Otsuki T."/>
            <person name="Sugiyama T."/>
            <person name="Irie R."/>
            <person name="Wakamatsu A."/>
            <person name="Hayashi K."/>
            <person name="Sato H."/>
            <person name="Nagai K."/>
            <person name="Kimura K."/>
            <person name="Makita H."/>
            <person name="Sekine M."/>
            <person name="Obayashi M."/>
            <person name="Nishi T."/>
            <person name="Shibahara T."/>
            <person name="Tanaka T."/>
            <person name="Ishii S."/>
            <person name="Yamamoto J."/>
            <person name="Saito K."/>
            <person name="Kawai Y."/>
            <person name="Isono Y."/>
            <person name="Nakamura Y."/>
            <person name="Nagahari K."/>
            <person name="Murakami K."/>
            <person name="Yasuda T."/>
            <person name="Iwayanagi T."/>
            <person name="Wagatsuma M."/>
            <person name="Shiratori A."/>
            <person name="Sudo H."/>
            <person name="Hosoiri T."/>
            <person name="Kaku Y."/>
            <person name="Kodaira H."/>
            <person name="Kondo H."/>
            <person name="Sugawara M."/>
            <person name="Takahashi M."/>
            <person name="Kanda K."/>
            <person name="Yokoi T."/>
            <person name="Furuya T."/>
            <person name="Kikkawa E."/>
            <person name="Omura Y."/>
            <person name="Abe K."/>
            <person name="Kamihara K."/>
            <person name="Katsuta N."/>
            <person name="Sato K."/>
            <person name="Tanikawa M."/>
            <person name="Yamazaki M."/>
            <person name="Ninomiya K."/>
            <person name="Ishibashi T."/>
            <person name="Yamashita H."/>
            <person name="Murakawa K."/>
            <person name="Fujimori K."/>
            <person name="Tanai H."/>
            <person name="Kimata M."/>
            <person name="Watanabe M."/>
            <person name="Hiraoka S."/>
            <person name="Chiba Y."/>
            <person name="Ishida S."/>
            <person name="Ono Y."/>
            <person name="Takiguchi S."/>
            <person name="Watanabe S."/>
            <person name="Yosida M."/>
            <person name="Hotuta T."/>
            <person name="Kusano J."/>
            <person name="Kanehori K."/>
            <person name="Takahashi-Fujii A."/>
            <person name="Hara H."/>
            <person name="Tanase T.-O."/>
            <person name="Nomura Y."/>
            <person name="Togiya S."/>
            <person name="Komai F."/>
            <person name="Hara R."/>
            <person name="Takeuchi K."/>
            <person name="Arita M."/>
            <person name="Imose N."/>
            <person name="Musashino K."/>
            <person name="Yuuki H."/>
            <person name="Oshima A."/>
            <person name="Sasaki N."/>
            <person name="Aotsuka S."/>
            <person name="Yoshikawa Y."/>
            <person name="Matsunawa H."/>
            <person name="Ichihara T."/>
            <person name="Shiohata N."/>
            <person name="Sano S."/>
            <person name="Moriya S."/>
            <person name="Momiyama H."/>
            <person name="Satoh N."/>
            <person name="Takami S."/>
            <person name="Terashima Y."/>
            <person name="Suzuki O."/>
            <person name="Nakagawa S."/>
            <person name="Senoh A."/>
            <person name="Mizoguchi H."/>
            <person name="Goto Y."/>
            <person name="Shimizu F."/>
            <person name="Wakebe H."/>
            <person name="Hishigaki H."/>
            <person name="Watanabe T."/>
            <person name="Sugiyama A."/>
            <person name="Takemoto M."/>
            <person name="Kawakami B."/>
            <person name="Yamazaki M."/>
            <person name="Watanabe K."/>
            <person name="Kumagai A."/>
            <person name="Itakura S."/>
            <person name="Fukuzumi Y."/>
            <person name="Fujimori Y."/>
            <person name="Komiyama M."/>
            <person name="Tashiro H."/>
            <person name="Tanigami A."/>
            <person name="Fujiwara T."/>
            <person name="Ono T."/>
            <person name="Yamada K."/>
            <person name="Fujii Y."/>
            <person name="Ozaki K."/>
            <person name="Hirao M."/>
            <person name="Ohmori Y."/>
            <person name="Kawabata A."/>
            <person name="Hikiji T."/>
            <person name="Kobatake N."/>
            <person name="Inagaki H."/>
            <person name="Ikema Y."/>
            <person name="Okamoto S."/>
            <person name="Okitani R."/>
            <person name="Kawakami T."/>
            <person name="Noguchi S."/>
            <person name="Itoh T."/>
            <person name="Shigeta K."/>
            <person name="Senba T."/>
            <person name="Matsumura K."/>
            <person name="Nakajima Y."/>
            <person name="Mizuno T."/>
            <person name="Morinaga M."/>
            <person name="Sasaki M."/>
            <person name="Togashi T."/>
            <person name="Oyama M."/>
            <person name="Hata H."/>
            <person name="Watanabe M."/>
            <person name="Komatsu T."/>
            <person name="Mizushima-Sugano J."/>
            <person name="Satoh T."/>
            <person name="Shirai Y."/>
            <person name="Takahashi Y."/>
            <person name="Nakagawa K."/>
            <person name="Okumura K."/>
            <person name="Nagase T."/>
            <person name="Nomura N."/>
            <person name="Kikuchi H."/>
            <person name="Masuho Y."/>
            <person name="Yamashita R."/>
            <person name="Nakai K."/>
            <person name="Yada T."/>
            <person name="Nakamura Y."/>
            <person name="Ohara O."/>
            <person name="Isogai T."/>
            <person name="Sugano S."/>
        </authorList>
    </citation>
    <scope>NUCLEOTIDE SEQUENCE [LARGE SCALE MRNA]</scope>
    <source>
        <tissue>Testis</tissue>
    </source>
</reference>
<reference key="2">
    <citation type="journal article" date="2006" name="Nature">
        <title>DNA sequence of human chromosome 17 and analysis of rearrangement in the human lineage.</title>
        <authorList>
            <person name="Zody M.C."/>
            <person name="Garber M."/>
            <person name="Adams D.J."/>
            <person name="Sharpe T."/>
            <person name="Harrow J."/>
            <person name="Lupski J.R."/>
            <person name="Nicholson C."/>
            <person name="Searle S.M."/>
            <person name="Wilming L."/>
            <person name="Young S.K."/>
            <person name="Abouelleil A."/>
            <person name="Allen N.R."/>
            <person name="Bi W."/>
            <person name="Bloom T."/>
            <person name="Borowsky M.L."/>
            <person name="Bugalter B.E."/>
            <person name="Butler J."/>
            <person name="Chang J.L."/>
            <person name="Chen C.-K."/>
            <person name="Cook A."/>
            <person name="Corum B."/>
            <person name="Cuomo C.A."/>
            <person name="de Jong P.J."/>
            <person name="DeCaprio D."/>
            <person name="Dewar K."/>
            <person name="FitzGerald M."/>
            <person name="Gilbert J."/>
            <person name="Gibson R."/>
            <person name="Gnerre S."/>
            <person name="Goldstein S."/>
            <person name="Grafham D.V."/>
            <person name="Grocock R."/>
            <person name="Hafez N."/>
            <person name="Hagopian D.S."/>
            <person name="Hart E."/>
            <person name="Norman C.H."/>
            <person name="Humphray S."/>
            <person name="Jaffe D.B."/>
            <person name="Jones M."/>
            <person name="Kamal M."/>
            <person name="Khodiyar V.K."/>
            <person name="LaButti K."/>
            <person name="Laird G."/>
            <person name="Lehoczky J."/>
            <person name="Liu X."/>
            <person name="Lokyitsang T."/>
            <person name="Loveland J."/>
            <person name="Lui A."/>
            <person name="Macdonald P."/>
            <person name="Major J.E."/>
            <person name="Matthews L."/>
            <person name="Mauceli E."/>
            <person name="McCarroll S.A."/>
            <person name="Mihalev A.H."/>
            <person name="Mudge J."/>
            <person name="Nguyen C."/>
            <person name="Nicol R."/>
            <person name="O'Leary S.B."/>
            <person name="Osoegawa K."/>
            <person name="Schwartz D.C."/>
            <person name="Shaw-Smith C."/>
            <person name="Stankiewicz P."/>
            <person name="Steward C."/>
            <person name="Swarbreck D."/>
            <person name="Venkataraman V."/>
            <person name="Whittaker C.A."/>
            <person name="Yang X."/>
            <person name="Zimmer A.R."/>
            <person name="Bradley A."/>
            <person name="Hubbard T."/>
            <person name="Birren B.W."/>
            <person name="Rogers J."/>
            <person name="Lander E.S."/>
            <person name="Nusbaum C."/>
        </authorList>
    </citation>
    <scope>NUCLEOTIDE SEQUENCE [LARGE SCALE GENOMIC DNA]</scope>
</reference>
<name>C295L_HUMAN</name>
<organism>
    <name type="scientific">Homo sapiens</name>
    <name type="common">Human</name>
    <dbReference type="NCBI Taxonomy" id="9606"/>
    <lineage>
        <taxon>Eukaryota</taxon>
        <taxon>Metazoa</taxon>
        <taxon>Chordata</taxon>
        <taxon>Craniata</taxon>
        <taxon>Vertebrata</taxon>
        <taxon>Euteleostomi</taxon>
        <taxon>Mammalia</taxon>
        <taxon>Eutheria</taxon>
        <taxon>Euarchontoglires</taxon>
        <taxon>Primates</taxon>
        <taxon>Haplorrhini</taxon>
        <taxon>Catarrhini</taxon>
        <taxon>Hominidae</taxon>
        <taxon>Homo</taxon>
    </lineage>
</organism>
<gene>
    <name evidence="5" type="primary">CEP295NL</name>
    <name evidence="5" type="synonym">KIAA1731NL</name>
</gene>